<proteinExistence type="evidence at protein level"/>
<comment type="function">
    <text evidence="7">Involved in ciliogenesis.</text>
</comment>
<comment type="subunit">
    <text evidence="6 7 8 9 11 13 14">Interacts (via central region) with CFAP418 (via N-terminus); the interaction is direct (PubMed:36233334). Interacts (via C-terminus) with microtubules (PubMed:22791751). Interacts with LCA5 (PubMed:22940612). Interacts with CEP290 (PubMed:22940612). Interacts with SDCCAG8 (PubMed:22940612). Interacts with FAM161B (PubMed:22791751). Interacts with POC1B (PubMed:25018096). Interacts with CEP78 (PubMed:27588451). Forms a microtubule-associated complex with POC5, CETN2 and POC1B (PubMed:32110738). Interacts with CCDC15 (PubMed:37934472).</text>
</comment>
<comment type="interaction">
    <interactant intactId="EBI-719941">
        <id>Q3B820</id>
    </interactant>
    <interactant intactId="EBI-745213">
        <id>P29972</id>
        <label>AQP1</label>
    </interactant>
    <organismsDiffer>false</organismsDiffer>
    <experiments>3</experiments>
</comment>
<comment type="interaction">
    <interactant intactId="EBI-719941">
        <id>Q3B820</id>
    </interactant>
    <interactant intactId="EBI-4400025">
        <id>Q9Y2T1</id>
        <label>AXIN2</label>
    </interactant>
    <organismsDiffer>false</organismsDiffer>
    <experiments>3</experiments>
</comment>
<comment type="interaction">
    <interactant intactId="EBI-719941">
        <id>Q3B820</id>
    </interactant>
    <interactant intactId="EBI-1642333">
        <id>Q9BYV9</id>
        <label>BACH2</label>
    </interactant>
    <organismsDiffer>false</organismsDiffer>
    <experiments>3</experiments>
</comment>
<comment type="interaction">
    <interactant intactId="EBI-719941">
        <id>Q3B820</id>
    </interactant>
    <interactant intactId="EBI-742722">
        <id>Q9BUH8</id>
        <label>BEGAIN</label>
    </interactant>
    <organismsDiffer>false</organismsDiffer>
    <experiments>3</experiments>
</comment>
<comment type="interaction">
    <interactant intactId="EBI-719941">
        <id>Q3B820</id>
    </interactant>
    <interactant intactId="EBI-1211496">
        <id>Q5T5X7</id>
        <label>BEND3</label>
    </interactant>
    <organismsDiffer>false</organismsDiffer>
    <experiments>3</experiments>
</comment>
<comment type="interaction">
    <interactant intactId="EBI-719941">
        <id>Q3B820</id>
    </interactant>
    <interactant intactId="EBI-724373">
        <id>Q7L4P6</id>
        <label>BEND5</label>
    </interactant>
    <organismsDiffer>false</organismsDiffer>
    <experiments>3</experiments>
</comment>
<comment type="interaction">
    <interactant intactId="EBI-719941">
        <id>Q3B820</id>
    </interactant>
    <interactant intactId="EBI-11975051">
        <id>Q8TD16-2</id>
        <label>BICD2</label>
    </interactant>
    <organismsDiffer>false</organismsDiffer>
    <experiments>3</experiments>
</comment>
<comment type="interaction">
    <interactant intactId="EBI-719941">
        <id>Q3B820</id>
    </interactant>
    <interactant intactId="EBI-10179719">
        <id>A2RRN7</id>
        <label>CADPS</label>
    </interactant>
    <organismsDiffer>false</organismsDiffer>
    <experiments>6</experiments>
</comment>
<comment type="interaction">
    <interactant intactId="EBI-719941">
        <id>Q3B820</id>
    </interactant>
    <interactant intactId="EBI-749920">
        <id>Q9P1Z2</id>
        <label>CALCOCO1</label>
    </interactant>
    <organismsDiffer>false</organismsDiffer>
    <experiments>3</experiments>
</comment>
<comment type="interaction">
    <interactant intactId="EBI-719941">
        <id>Q3B820</id>
    </interactant>
    <interactant intactId="EBI-739580">
        <id>Q13137</id>
        <label>CALCOCO2</label>
    </interactant>
    <organismsDiffer>false</organismsDiffer>
    <experiments>6</experiments>
</comment>
<comment type="interaction">
    <interactant intactId="EBI-719941">
        <id>Q3B820</id>
    </interactant>
    <interactant intactId="EBI-751319">
        <id>Q9H257</id>
        <label>CARD9</label>
    </interactant>
    <organismsDiffer>false</organismsDiffer>
    <experiments>4</experiments>
</comment>
<comment type="interaction">
    <interactant intactId="EBI-719941">
        <id>Q3B820</id>
    </interactant>
    <interactant intactId="EBI-11530605">
        <id>Q9H257-2</id>
        <label>CARD9</label>
    </interactant>
    <organismsDiffer>false</organismsDiffer>
    <experiments>6</experiments>
</comment>
<comment type="interaction">
    <interactant intactId="EBI-719941">
        <id>Q3B820</id>
    </interactant>
    <interactant intactId="EBI-741724">
        <id>Q8NA61</id>
        <label>CBY2</label>
    </interactant>
    <organismsDiffer>false</organismsDiffer>
    <experiments>3</experiments>
</comment>
<comment type="interaction">
    <interactant intactId="EBI-719941">
        <id>Q3B820</id>
    </interactant>
    <interactant intactId="EBI-11524851">
        <id>Q8NA61-2</id>
        <label>CBY2</label>
    </interactant>
    <organismsDiffer>false</organismsDiffer>
    <experiments>5</experiments>
</comment>
<comment type="interaction">
    <interactant intactId="EBI-719941">
        <id>Q3B820</id>
    </interactant>
    <interactant intactId="EBI-10171570">
        <id>Q68D86</id>
        <label>CCDC102B</label>
    </interactant>
    <organismsDiffer>false</organismsDiffer>
    <experiments>6</experiments>
</comment>
<comment type="interaction">
    <interactant intactId="EBI-719941">
        <id>Q3B820</id>
    </interactant>
    <interactant intactId="EBI-11977221">
        <id>Q86Z20</id>
        <label>CCDC125</label>
    </interactant>
    <organismsDiffer>false</organismsDiffer>
    <experiments>3</experiments>
</comment>
<comment type="interaction">
    <interactant intactId="EBI-719941">
        <id>Q3B820</id>
    </interactant>
    <interactant intactId="EBI-10961312">
        <id>Q8IYE1</id>
        <label>CCDC13</label>
    </interactant>
    <organismsDiffer>false</organismsDiffer>
    <experiments>3</experiments>
</comment>
<comment type="interaction">
    <interactant intactId="EBI-719941">
        <id>Q3B820</id>
    </interactant>
    <interactant intactId="EBI-10171416">
        <id>Q96JN2-2</id>
        <label>CCDC136</label>
    </interactant>
    <organismsDiffer>false</organismsDiffer>
    <experiments>3</experiments>
</comment>
<comment type="interaction">
    <interactant intactId="EBI-719941">
        <id>Q3B820</id>
    </interactant>
    <interactant intactId="EBI-740814">
        <id>Q8N715</id>
        <label>CCDC185</label>
    </interactant>
    <organismsDiffer>false</organismsDiffer>
    <experiments>3</experiments>
</comment>
<comment type="interaction">
    <interactant intactId="EBI-719941">
        <id>Q3B820</id>
    </interactant>
    <interactant intactId="EBI-2808286">
        <id>Q2TAC2</id>
        <label>CCDC57</label>
    </interactant>
    <organismsDiffer>false</organismsDiffer>
    <experiments>3</experiments>
</comment>
<comment type="interaction">
    <interactant intactId="EBI-719941">
        <id>Q3B820</id>
    </interactant>
    <interactant intactId="EBI-10961624">
        <id>Q2TAC2-2</id>
        <label>CCDC57</label>
    </interactant>
    <organismsDiffer>false</organismsDiffer>
    <experiments>6</experiments>
</comment>
<comment type="interaction">
    <interactant intactId="EBI-719941">
        <id>Q3B820</id>
    </interactant>
    <interactant intactId="EBI-347573">
        <id>A6NC98</id>
        <label>CCDC88B</label>
    </interactant>
    <organismsDiffer>false</organismsDiffer>
    <experiments>3</experiments>
</comment>
<comment type="interaction">
    <interactant intactId="EBI-719941">
        <id>Q3B820</id>
    </interactant>
    <interactant intactId="EBI-395261">
        <id>P24863</id>
        <label>CCNC</label>
    </interactant>
    <organismsDiffer>false</organismsDiffer>
    <experiments>3</experiments>
</comment>
<comment type="interaction">
    <interactant intactId="EBI-719941">
        <id>Q3B820</id>
    </interactant>
    <interactant intactId="EBI-748961">
        <id>O95273</id>
        <label>CCNDBP1</label>
    </interactant>
    <organismsDiffer>false</organismsDiffer>
    <experiments>5</experiments>
</comment>
<comment type="interaction">
    <interactant intactId="EBI-719941">
        <id>Q3B820</id>
    </interactant>
    <interactant intactId="EBI-1181367">
        <id>Q01850</id>
        <label>CDR2</label>
    </interactant>
    <organismsDiffer>false</organismsDiffer>
    <experiments>6</experiments>
</comment>
<comment type="interaction">
    <interactant intactId="EBI-719941">
        <id>Q3B820</id>
    </interactant>
    <interactant intactId="EBI-11063830">
        <id>Q86X02</id>
        <label>CDR2L</label>
    </interactant>
    <organismsDiffer>false</organismsDiffer>
    <experiments>3</experiments>
</comment>
<comment type="interaction">
    <interactant intactId="EBI-719941">
        <id>Q3B820</id>
    </interactant>
    <interactant intactId="EBI-744115">
        <id>Q9C0F1</id>
        <label>CEP44</label>
    </interactant>
    <organismsDiffer>false</organismsDiffer>
    <experiments>3</experiments>
</comment>
<comment type="interaction">
    <interactant intactId="EBI-719941">
        <id>Q3B820</id>
    </interactant>
    <interactant intactId="EBI-10181988">
        <id>Q8IYX8-2</id>
        <label>CEP57L1</label>
    </interactant>
    <organismsDiffer>false</organismsDiffer>
    <experiments>3</experiments>
</comment>
<comment type="interaction">
    <interactant intactId="EBI-719941">
        <id>Q3B820</id>
    </interactant>
    <interactant intactId="EBI-741977">
        <id>Q96MT8</id>
        <label>CEP63</label>
    </interactant>
    <organismsDiffer>false</organismsDiffer>
    <experiments>3</experiments>
</comment>
<comment type="interaction">
    <interactant intactId="EBI-719941">
        <id>Q3B820</id>
    </interactant>
    <interactant intactId="EBI-11522539">
        <id>Q96MT8-3</id>
        <label>CEP63</label>
    </interactant>
    <organismsDiffer>false</organismsDiffer>
    <experiments>3</experiments>
</comment>
<comment type="interaction">
    <interactant intactId="EBI-719941">
        <id>Q3B820</id>
    </interactant>
    <interactant intactId="EBI-739624">
        <id>Q8NHQ1</id>
        <label>CEP70</label>
    </interactant>
    <organismsDiffer>false</organismsDiffer>
    <experiments>6</experiments>
</comment>
<comment type="interaction">
    <interactant intactId="EBI-719941">
        <id>Q3B820</id>
    </interactant>
    <interactant intactId="EBI-739498">
        <id>Q9P209</id>
        <label>CEP72</label>
    </interactant>
    <organismsDiffer>false</organismsDiffer>
    <experiments>3</experiments>
</comment>
<comment type="interaction">
    <interactant intactId="EBI-719941">
        <id>Q3B820</id>
    </interactant>
    <interactant intactId="EBI-11904873">
        <id>Q96NL8</id>
        <label>CFAP418</label>
    </interactant>
    <organismsDiffer>false</organismsDiffer>
    <experiments>5</experiments>
</comment>
<comment type="interaction">
    <interactant intactId="EBI-719941">
        <id>Q3B820</id>
    </interactant>
    <interactant intactId="EBI-11962928">
        <id>Q9UI47-2</id>
        <label>CTNNA3</label>
    </interactant>
    <organismsDiffer>false</organismsDiffer>
    <experiments>3</experiments>
</comment>
<comment type="interaction">
    <interactant intactId="EBI-719941">
        <id>Q3B820</id>
    </interactant>
    <interactant intactId="EBI-2807297">
        <id>Q7L7V1</id>
        <label>DHX32</label>
    </interactant>
    <organismsDiffer>false</organismsDiffer>
    <experiments>9</experiments>
</comment>
<comment type="interaction">
    <interactant intactId="EBI-719941">
        <id>Q3B820</id>
    </interactant>
    <interactant intactId="EBI-10174653">
        <id>Q8NF50-2</id>
        <label>DOCK8</label>
    </interactant>
    <organismsDiffer>false</organismsDiffer>
    <experiments>3</experiments>
</comment>
<comment type="interaction">
    <interactant intactId="EBI-719941">
        <id>Q3B820</id>
    </interactant>
    <interactant intactId="EBI-10174566">
        <id>A2ABF9</id>
        <label>EHMT2</label>
    </interactant>
    <organismsDiffer>false</organismsDiffer>
    <experiments>3</experiments>
</comment>
<comment type="interaction">
    <interactant intactId="EBI-719941">
        <id>Q3B820</id>
    </interactant>
    <interactant intactId="EBI-852291">
        <id>O60447</id>
        <label>EVI5</label>
    </interactant>
    <organismsDiffer>false</organismsDiffer>
    <experiments>3</experiments>
</comment>
<comment type="interaction">
    <interactant intactId="EBI-719941">
        <id>Q3B820</id>
    </interactant>
    <interactant intactId="EBI-719941">
        <id>Q3B820</id>
        <label>FAM161A</label>
    </interactant>
    <organismsDiffer>false</organismsDiffer>
    <experiments>4</experiments>
</comment>
<comment type="interaction">
    <interactant intactId="EBI-719941">
        <id>Q3B820</id>
    </interactant>
    <interactant intactId="EBI-10175124">
        <id>Q8IZU0</id>
        <label>FAM9B</label>
    </interactant>
    <organismsDiffer>false</organismsDiffer>
    <experiments>3</experiments>
</comment>
<comment type="interaction">
    <interactant intactId="EBI-719941">
        <id>Q3B820</id>
    </interactant>
    <interactant intactId="EBI-5661036">
        <id>A1L4K1</id>
        <label>FSD2</label>
    </interactant>
    <organismsDiffer>false</organismsDiffer>
    <experiments>3</experiments>
</comment>
<comment type="interaction">
    <interactant intactId="EBI-719941">
        <id>Q3B820</id>
    </interactant>
    <interactant intactId="EBI-11022345">
        <id>P51114-2</id>
        <label>FXR1</label>
    </interactant>
    <organismsDiffer>false</organismsDiffer>
    <experiments>3</experiments>
</comment>
<comment type="interaction">
    <interactant intactId="EBI-719941">
        <id>Q3B820</id>
    </interactant>
    <interactant intactId="EBI-1052570">
        <id>O95995</id>
        <label>GAS8</label>
    </interactant>
    <organismsDiffer>false</organismsDiffer>
    <experiments>3</experiments>
</comment>
<comment type="interaction">
    <interactant intactId="EBI-719941">
        <id>Q3B820</id>
    </interactant>
    <interactant intactId="EBI-618309">
        <id>Q08379</id>
        <label>GOLGA2</label>
    </interactant>
    <organismsDiffer>false</organismsDiffer>
    <experiments>5</experiments>
</comment>
<comment type="interaction">
    <interactant intactId="EBI-719941">
        <id>Q3B820</id>
    </interactant>
    <interactant intactId="EBI-5916454">
        <id>A6NEM1</id>
        <label>GOLGA6L9</label>
    </interactant>
    <organismsDiffer>false</organismsDiffer>
    <experiments>3</experiments>
</comment>
<comment type="interaction">
    <interactant intactId="EBI-719941">
        <id>Q3B820</id>
    </interactant>
    <interactant intactId="EBI-2349758">
        <id>Q86WP2</id>
        <label>GPBP1</label>
    </interactant>
    <organismsDiffer>false</organismsDiffer>
    <experiments>3</experiments>
</comment>
<comment type="interaction">
    <interactant intactId="EBI-719941">
        <id>Q3B820</id>
    </interactant>
    <interactant intactId="EBI-11519926">
        <id>Q6PI77</id>
        <label>GPRASP3</label>
    </interactant>
    <organismsDiffer>false</organismsDiffer>
    <experiments>3</experiments>
</comment>
<comment type="interaction">
    <interactant intactId="EBI-719941">
        <id>Q3B820</id>
    </interactant>
    <interactant intactId="EBI-717919">
        <id>Q4V328</id>
        <label>GRIPAP1</label>
    </interactant>
    <organismsDiffer>false</organismsDiffer>
    <experiments>3</experiments>
</comment>
<comment type="interaction">
    <interactant intactId="EBI-719941">
        <id>Q3B820</id>
    </interactant>
    <interactant intactId="EBI-5460660">
        <id>Q96MH2</id>
        <label>HEXIM2</label>
    </interactant>
    <organismsDiffer>false</organismsDiffer>
    <experiments>3</experiments>
</comment>
<comment type="interaction">
    <interactant intactId="EBI-719941">
        <id>Q3B820</id>
    </interactant>
    <interactant intactId="EBI-2549423">
        <id>Q6NT76</id>
        <label>HMBOX1</label>
    </interactant>
    <organismsDiffer>false</organismsDiffer>
    <experiments>6</experiments>
</comment>
<comment type="interaction">
    <interactant intactId="EBI-719941">
        <id>Q3B820</id>
    </interactant>
    <interactant intactId="EBI-746704">
        <id>Q9UJC3</id>
        <label>HOOK1</label>
    </interactant>
    <organismsDiffer>false</organismsDiffer>
    <experiments>5</experiments>
</comment>
<comment type="interaction">
    <interactant intactId="EBI-719941">
        <id>Q3B820</id>
    </interactant>
    <interactant intactId="EBI-10961706">
        <id>Q96ED9-2</id>
        <label>HOOK2</label>
    </interactant>
    <organismsDiffer>false</organismsDiffer>
    <experiments>3</experiments>
</comment>
<comment type="interaction">
    <interactant intactId="EBI-719941">
        <id>Q3B820</id>
    </interactant>
    <interactant intactId="EBI-745305">
        <id>Q13422</id>
        <label>IKZF1</label>
    </interactant>
    <organismsDiffer>false</organismsDiffer>
    <experiments>3</experiments>
</comment>
<comment type="interaction">
    <interactant intactId="EBI-719941">
        <id>Q3B820</id>
    </interactant>
    <interactant intactId="EBI-769401">
        <id>Q8NBZ0</id>
        <label>INO80E</label>
    </interactant>
    <organismsDiffer>false</organismsDiffer>
    <experiments>3</experiments>
</comment>
<comment type="interaction">
    <interactant intactId="EBI-719941">
        <id>Q3B820</id>
    </interactant>
    <interactant intactId="EBI-17181882">
        <id>O75564-2</id>
        <label>JRK</label>
    </interactant>
    <organismsDiffer>false</organismsDiffer>
    <experiments>3</experiments>
</comment>
<comment type="interaction">
    <interactant intactId="EBI-719941">
        <id>Q3B820</id>
    </interactant>
    <interactant intactId="EBI-2556193">
        <id>Q63ZY3</id>
        <label>KANK2</label>
    </interactant>
    <organismsDiffer>false</organismsDiffer>
    <experiments>3</experiments>
</comment>
<comment type="interaction">
    <interactant intactId="EBI-719941">
        <id>Q3B820</id>
    </interactant>
    <interactant intactId="EBI-749265">
        <id>Q8N6L0</id>
        <label>KASH5</label>
    </interactant>
    <organismsDiffer>false</organismsDiffer>
    <experiments>3</experiments>
</comment>
<comment type="interaction">
    <interactant intactId="EBI-719941">
        <id>Q3B820</id>
    </interactant>
    <interactant intactId="EBI-399080">
        <id>Q92993</id>
        <label>KAT5</label>
    </interactant>
    <organismsDiffer>false</organismsDiffer>
    <experiments>3</experiments>
</comment>
<comment type="interaction">
    <interactant intactId="EBI-719941">
        <id>Q3B820</id>
    </interactant>
    <interactant intactId="EBI-710124">
        <id>O60341</id>
        <label>KDM1A</label>
    </interactant>
    <organismsDiffer>false</organismsDiffer>
    <experiments>3</experiments>
</comment>
<comment type="interaction">
    <interactant intactId="EBI-719941">
        <id>Q3B820</id>
    </interactant>
    <interactant intactId="EBI-2805604">
        <id>Q2KHM9</id>
        <label>KIAA0753</label>
    </interactant>
    <organismsDiffer>false</organismsDiffer>
    <experiments>3</experiments>
</comment>
<comment type="interaction">
    <interactant intactId="EBI-719941">
        <id>Q3B820</id>
    </interactant>
    <interactant intactId="EBI-3437878">
        <id>Q86T90</id>
        <label>KIAA1328</label>
    </interactant>
    <organismsDiffer>false</organismsDiffer>
    <experiments>3</experiments>
</comment>
<comment type="interaction">
    <interactant intactId="EBI-719941">
        <id>Q3B820</id>
    </interactant>
    <interactant intactId="EBI-14069005">
        <id>Q9BVG8-5</id>
        <label>KIFC3</label>
    </interactant>
    <organismsDiffer>false</organismsDiffer>
    <experiments>3</experiments>
</comment>
<comment type="interaction">
    <interactant intactId="EBI-719941">
        <id>Q3B820</id>
    </interactant>
    <interactant intactId="EBI-10172290">
        <id>P60409</id>
        <label>KRTAP10-7</label>
    </interactant>
    <organismsDiffer>false</organismsDiffer>
    <experiments>3</experiments>
</comment>
<comment type="interaction">
    <interactant intactId="EBI-719941">
        <id>Q3B820</id>
    </interactant>
    <interactant intactId="EBI-10171774">
        <id>P60410</id>
        <label>KRTAP10-8</label>
    </interactant>
    <organismsDiffer>false</organismsDiffer>
    <experiments>3</experiments>
</comment>
<comment type="interaction">
    <interactant intactId="EBI-719941">
        <id>Q3B820</id>
    </interactant>
    <interactant intactId="EBI-10172052">
        <id>P60411</id>
        <label>KRTAP10-9</label>
    </interactant>
    <organismsDiffer>false</organismsDiffer>
    <experiments>3</experiments>
</comment>
<comment type="interaction">
    <interactant intactId="EBI-719941">
        <id>Q3B820</id>
    </interactant>
    <interactant intactId="EBI-14065470">
        <id>Q9BYR9</id>
        <label>KRTAP2-4</label>
    </interactant>
    <organismsDiffer>false</organismsDiffer>
    <experiments>3</experiments>
</comment>
<comment type="interaction">
    <interactant intactId="EBI-719941">
        <id>Q3B820</id>
    </interactant>
    <interactant intactId="EBI-11987425">
        <id>Q6L8G8</id>
        <label>KRTAP5-7</label>
    </interactant>
    <organismsDiffer>false</organismsDiffer>
    <experiments>3</experiments>
</comment>
<comment type="interaction">
    <interactant intactId="EBI-719941">
        <id>Q3B820</id>
    </interactant>
    <interactant intactId="EBI-3958099">
        <id>P26371</id>
        <label>KRTAP5-9</label>
    </interactant>
    <organismsDiffer>false</organismsDiffer>
    <experiments>6</experiments>
</comment>
<comment type="interaction">
    <interactant intactId="EBI-719941">
        <id>Q3B820</id>
    </interactant>
    <interactant intactId="EBI-740738">
        <id>O95751</id>
        <label>LDOC1</label>
    </interactant>
    <organismsDiffer>false</organismsDiffer>
    <experiments>3</experiments>
</comment>
<comment type="interaction">
    <interactant intactId="EBI-719941">
        <id>Q3B820</id>
    </interactant>
    <interactant intactId="EBI-351935">
        <id>P02545</id>
        <label>LMNA</label>
    </interactant>
    <organismsDiffer>false</organismsDiffer>
    <experiments>3</experiments>
</comment>
<comment type="interaction">
    <interactant intactId="EBI-719941">
        <id>Q3B820</id>
    </interactant>
    <interactant intactId="EBI-12898559">
        <id>Q8IV03</id>
        <label>LURAP1L</label>
    </interactant>
    <organismsDiffer>false</organismsDiffer>
    <experiments>3</experiments>
</comment>
<comment type="interaction">
    <interactant intactId="EBI-719941">
        <id>Q3B820</id>
    </interactant>
    <interactant intactId="EBI-1216080">
        <id>Q9Y250</id>
        <label>LZTS1</label>
    </interactant>
    <organismsDiffer>false</organismsDiffer>
    <experiments>5</experiments>
</comment>
<comment type="interaction">
    <interactant intactId="EBI-719941">
        <id>Q3B820</id>
    </interactant>
    <interactant intactId="EBI-741037">
        <id>Q9BRK4</id>
        <label>LZTS2</label>
    </interactant>
    <organismsDiffer>false</organismsDiffer>
    <experiments>6</experiments>
</comment>
<comment type="interaction">
    <interactant intactId="EBI-719941">
        <id>Q3B820</id>
    </interactant>
    <interactant intactId="EBI-739552">
        <id>P43364</id>
        <label>MAGEA11</label>
    </interactant>
    <organismsDiffer>false</organismsDiffer>
    <experiments>3</experiments>
</comment>
<comment type="interaction">
    <interactant intactId="EBI-719941">
        <id>Q3B820</id>
    </interactant>
    <interactant intactId="EBI-307531">
        <id>P23508</id>
        <label>MCC</label>
    </interactant>
    <organismsDiffer>false</organismsDiffer>
    <experiments>3</experiments>
</comment>
<comment type="interaction">
    <interactant intactId="EBI-719941">
        <id>Q3B820</id>
    </interactant>
    <interactant intactId="EBI-374900">
        <id>Q14566</id>
        <label>MCM6</label>
    </interactant>
    <organismsDiffer>false</organismsDiffer>
    <experiments>3</experiments>
</comment>
<comment type="interaction">
    <interactant intactId="EBI-719941">
        <id>Q3B820</id>
    </interactant>
    <interactant intactId="EBI-724076">
        <id>Q99750</id>
        <label>MDFI</label>
    </interactant>
    <organismsDiffer>false</organismsDiffer>
    <experiments>6</experiments>
</comment>
<comment type="interaction">
    <interactant intactId="EBI-719941">
        <id>Q3B820</id>
    </interactant>
    <interactant intactId="EBI-10172526">
        <id>Q9UJV3-2</id>
        <label>MID2</label>
    </interactant>
    <organismsDiffer>false</organismsDiffer>
    <experiments>6</experiments>
</comment>
<comment type="interaction">
    <interactant intactId="EBI-719941">
        <id>Q3B820</id>
    </interactant>
    <interactant intactId="EBI-2548751">
        <id>Q8TD10</id>
        <label>MIPOL1</label>
    </interactant>
    <organismsDiffer>false</organismsDiffer>
    <experiments>6</experiments>
</comment>
<comment type="interaction">
    <interactant intactId="EBI-719941">
        <id>Q3B820</id>
    </interactant>
    <interactant intactId="EBI-373524">
        <id>Q9UHC7</id>
        <label>MKRN1</label>
    </interactant>
    <organismsDiffer>false</organismsDiffer>
    <experiments>3</experiments>
</comment>
<comment type="interaction">
    <interactant intactId="EBI-719941">
        <id>Q3B820</id>
    </interactant>
    <interactant intactId="EBI-14083835">
        <id>O94964-4</id>
        <label>MTCL2</label>
    </interactant>
    <organismsDiffer>false</organismsDiffer>
    <experiments>3</experiments>
</comment>
<comment type="interaction">
    <interactant intactId="EBI-719941">
        <id>Q3B820</id>
    </interactant>
    <interactant intactId="EBI-742948">
        <id>Q5JR59</id>
        <label>MTUS2</label>
    </interactant>
    <organismsDiffer>false</organismsDiffer>
    <experiments>3</experiments>
</comment>
<comment type="interaction">
    <interactant intactId="EBI-719941">
        <id>Q3B820</id>
    </interactant>
    <interactant intactId="EBI-11522433">
        <id>Q5JR59-3</id>
        <label>MTUS2</label>
    </interactant>
    <organismsDiffer>false</organismsDiffer>
    <experiments>5</experiments>
</comment>
<comment type="interaction">
    <interactant intactId="EBI-719941">
        <id>Q3B820</id>
    </interactant>
    <interactant intactId="EBI-10172876">
        <id>Q7Z6G3-2</id>
        <label>NECAB2</label>
    </interactant>
    <organismsDiffer>false</organismsDiffer>
    <experiments>3</experiments>
</comment>
<comment type="interaction">
    <interactant intactId="EBI-719941">
        <id>Q3B820</id>
    </interactant>
    <interactant intactId="EBI-719716">
        <id>Q9Y2I6</id>
        <label>NINL</label>
    </interactant>
    <organismsDiffer>false</organismsDiffer>
    <experiments>3</experiments>
</comment>
<comment type="interaction">
    <interactant intactId="EBI-719941">
        <id>Q3B820</id>
    </interactant>
    <interactant intactId="EBI-10178410">
        <id>Q86Y26</id>
        <label>NUTM1</label>
    </interactant>
    <organismsDiffer>false</organismsDiffer>
    <experiments>3</experiments>
</comment>
<comment type="interaction">
    <interactant intactId="EBI-719941">
        <id>Q3B820</id>
    </interactant>
    <interactant intactId="EBI-1051317">
        <id>Q9H4L5</id>
        <label>OSBPL3</label>
    </interactant>
    <organismsDiffer>false</organismsDiffer>
    <experiments>3</experiments>
</comment>
<comment type="interaction">
    <interactant intactId="EBI-719941">
        <id>Q3B820</id>
    </interactant>
    <interactant intactId="EBI-1105124">
        <id>Q5VU43</id>
        <label>PDE4DIP</label>
    </interactant>
    <organismsDiffer>false</organismsDiffer>
    <experiments>3</experiments>
</comment>
<comment type="interaction">
    <interactant intactId="EBI-719941">
        <id>Q3B820</id>
    </interactant>
    <interactant intactId="EBI-10240575">
        <id>Q8TBR0</id>
        <label>PDE4DIP</label>
    </interactant>
    <organismsDiffer>false</organismsDiffer>
    <experiments>3</experiments>
</comment>
<comment type="interaction">
    <interactant intactId="EBI-719941">
        <id>Q3B820</id>
    </interactant>
    <interactant intactId="EBI-713786">
        <id>Q8IXK0</id>
        <label>PHC2</label>
    </interactant>
    <organismsDiffer>false</organismsDiffer>
    <experiments>3</experiments>
</comment>
<comment type="interaction">
    <interactant intactId="EBI-719941">
        <id>Q3B820</id>
    </interactant>
    <interactant intactId="EBI-14066006">
        <id>Q4G0R1</id>
        <label>PIBF1</label>
    </interactant>
    <organismsDiffer>false</organismsDiffer>
    <experiments>3</experiments>
</comment>
<comment type="interaction">
    <interactant intactId="EBI-719941">
        <id>Q3B820</id>
    </interactant>
    <interactant intactId="EBI-79165">
        <id>Q9NRD5</id>
        <label>PICK1</label>
    </interactant>
    <organismsDiffer>false</organismsDiffer>
    <experiments>3</experiments>
</comment>
<comment type="interaction">
    <interactant intactId="EBI-719941">
        <id>Q3B820</id>
    </interactant>
    <interactant intactId="EBI-949255">
        <id>Q58EX7</id>
        <label>PLEKHG4</label>
    </interactant>
    <organismsDiffer>false</organismsDiffer>
    <experiments>3</experiments>
</comment>
<comment type="interaction">
    <interactant intactId="EBI-719941">
        <id>Q3B820</id>
    </interactant>
    <interactant intactId="EBI-302345">
        <id>Q8ND90</id>
        <label>PNMA1</label>
    </interactant>
    <organismsDiffer>false</organismsDiffer>
    <experiments>3</experiments>
</comment>
<comment type="interaction">
    <interactant intactId="EBI-719941">
        <id>Q3B820</id>
    </interactant>
    <interactant intactId="EBI-302355">
        <id>Q9UL42</id>
        <label>PNMA2</label>
    </interactant>
    <organismsDiffer>false</organismsDiffer>
    <experiments>4</experiments>
</comment>
<comment type="interaction">
    <interactant intactId="EBI-719941">
        <id>Q3B820</id>
    </interactant>
    <interactant intactId="EBI-2561090">
        <id>Q8NA72</id>
        <label>POC5</label>
    </interactant>
    <organismsDiffer>false</organismsDiffer>
    <experiments>6</experiments>
</comment>
<comment type="interaction">
    <interactant intactId="EBI-719941">
        <id>Q3B820</id>
    </interactant>
    <interactant intactId="EBI-11751537">
        <id>Q8NA72-3</id>
        <label>POC5</label>
    </interactant>
    <organismsDiffer>false</organismsDiffer>
    <experiments>3</experiments>
</comment>
<comment type="interaction">
    <interactant intactId="EBI-719941">
        <id>Q3B820</id>
    </interactant>
    <interactant intactId="EBI-745426">
        <id>Q13136</id>
        <label>PPFIA1</label>
    </interactant>
    <organismsDiffer>false</organismsDiffer>
    <experiments>5</experiments>
</comment>
<comment type="interaction">
    <interactant intactId="EBI-719941">
        <id>Q3B820</id>
    </interactant>
    <interactant intactId="EBI-2561661">
        <id>Q969Q6</id>
        <label>PPP2R3C</label>
    </interactant>
    <organismsDiffer>false</organismsDiffer>
    <experiments>3</experiments>
</comment>
<comment type="interaction">
    <interactant intactId="EBI-719941">
        <id>Q3B820</id>
    </interactant>
    <interactant intactId="EBI-2805516">
        <id>P31321</id>
        <label>PRKAR1B</label>
    </interactant>
    <organismsDiffer>false</organismsDiffer>
    <experiments>3</experiments>
</comment>
<comment type="interaction">
    <interactant intactId="EBI-719941">
        <id>Q3B820</id>
    </interactant>
    <interactant intactId="EBI-347462">
        <id>P47897</id>
        <label>QARS1</label>
    </interactant>
    <organismsDiffer>false</organismsDiffer>
    <experiments>3</experiments>
</comment>
<comment type="interaction">
    <interactant intactId="EBI-719941">
        <id>Q3B820</id>
    </interactant>
    <interactant intactId="EBI-726876">
        <id>Q6NUQ1</id>
        <label>RINT1</label>
    </interactant>
    <organismsDiffer>false</organismsDiffer>
    <experiments>3</experiments>
</comment>
<comment type="interaction">
    <interactant intactId="EBI-719941">
        <id>Q3B820</id>
    </interactant>
    <interactant intactId="EBI-1378139">
        <id>Q9HAT0</id>
        <label>ROPN1</label>
    </interactant>
    <organismsDiffer>false</organismsDiffer>
    <experiments>3</experiments>
</comment>
<comment type="interaction">
    <interactant intactId="EBI-719941">
        <id>Q3B820</id>
    </interactant>
    <interactant intactId="EBI-2952709">
        <id>Q92622</id>
        <label>RUBCN</label>
    </interactant>
    <organismsDiffer>false</organismsDiffer>
    <experiments>3</experiments>
</comment>
<comment type="interaction">
    <interactant intactId="EBI-719941">
        <id>Q3B820</id>
    </interactant>
    <interactant intactId="EBI-747225">
        <id>Q59EK9</id>
        <label>RUNDC3A</label>
    </interactant>
    <organismsDiffer>false</organismsDiffer>
    <experiments>3</experiments>
</comment>
<comment type="interaction">
    <interactant intactId="EBI-719941">
        <id>Q3B820</id>
    </interactant>
    <interactant intactId="EBI-748391">
        <id>Q9BWG6</id>
        <label>SCNM1</label>
    </interactant>
    <organismsDiffer>false</organismsDiffer>
    <experiments>3</experiments>
</comment>
<comment type="interaction">
    <interactant intactId="EBI-719941">
        <id>Q3B820</id>
    </interactant>
    <interactant intactId="EBI-358489">
        <id>Q96GM5</id>
        <label>SMARCD1</label>
    </interactant>
    <organismsDiffer>false</organismsDiffer>
    <experiments>3</experiments>
</comment>
<comment type="interaction">
    <interactant intactId="EBI-719941">
        <id>Q3B820</id>
    </interactant>
    <interactant intactId="EBI-5235340">
        <id>Q7Z699</id>
        <label>SPRED1</label>
    </interactant>
    <organismsDiffer>false</organismsDiffer>
    <experiments>3</experiments>
</comment>
<comment type="interaction">
    <interactant intactId="EBI-719941">
        <id>Q3B820</id>
    </interactant>
    <interactant intactId="EBI-2212028">
        <id>Q9Y2D8</id>
        <label>SSX2IP</label>
    </interactant>
    <organismsDiffer>false</organismsDiffer>
    <experiments>3</experiments>
</comment>
<comment type="interaction">
    <interactant intactId="EBI-719941">
        <id>Q3B820</id>
    </interactant>
    <interactant intactId="EBI-714135">
        <id>O75558</id>
        <label>STX11</label>
    </interactant>
    <organismsDiffer>false</organismsDiffer>
    <experiments>3</experiments>
</comment>
<comment type="interaction">
    <interactant intactId="EBI-719941">
        <id>Q3B820</id>
    </interactant>
    <interactant intactId="EBI-6872807">
        <id>Q8N0S2</id>
        <label>SYCE1</label>
    </interactant>
    <organismsDiffer>false</organismsDiffer>
    <experiments>3</experiments>
</comment>
<comment type="interaction">
    <interactant intactId="EBI-719941">
        <id>Q3B820</id>
    </interactant>
    <interactant intactId="EBI-529518">
        <id>Q86VP1</id>
        <label>TAX1BP1</label>
    </interactant>
    <organismsDiffer>false</organismsDiffer>
    <experiments>3</experiments>
</comment>
<comment type="interaction">
    <interactant intactId="EBI-719941">
        <id>Q3B820</id>
    </interactant>
    <interactant intactId="EBI-1644036">
        <id>Q86TI0</id>
        <label>TBC1D1</label>
    </interactant>
    <organismsDiffer>false</organismsDiffer>
    <experiments>3</experiments>
</comment>
<comment type="interaction">
    <interactant intactId="EBI-719941">
        <id>Q3B820</id>
    </interactant>
    <interactant intactId="EBI-1105213">
        <id>Q9UBB9</id>
        <label>TFIP11</label>
    </interactant>
    <organismsDiffer>false</organismsDiffer>
    <experiments>9</experiments>
</comment>
<comment type="interaction">
    <interactant intactId="EBI-719941">
        <id>Q3B820</id>
    </interactant>
    <interactant intactId="EBI-357849">
        <id>Q15025</id>
        <label>TNIP1</label>
    </interactant>
    <organismsDiffer>false</organismsDiffer>
    <experiments>6</experiments>
</comment>
<comment type="interaction">
    <interactant intactId="EBI-719941">
        <id>Q3B820</id>
    </interactant>
    <interactant intactId="EBI-2509913">
        <id>Q96KP6</id>
        <label>TNIP3</label>
    </interactant>
    <organismsDiffer>false</organismsDiffer>
    <experiments>3</experiments>
</comment>
<comment type="interaction">
    <interactant intactId="EBI-719941">
        <id>Q3B820</id>
    </interactant>
    <interactant intactId="EBI-359224">
        <id>Q13077</id>
        <label>TRAF1</label>
    </interactant>
    <organismsDiffer>false</organismsDiffer>
    <experiments>5</experiments>
</comment>
<comment type="interaction">
    <interactant intactId="EBI-719941">
        <id>Q3B820</id>
    </interactant>
    <interactant intactId="EBI-355744">
        <id>Q12933</id>
        <label>TRAF2</label>
    </interactant>
    <organismsDiffer>false</organismsDiffer>
    <experiments>3</experiments>
</comment>
<comment type="interaction">
    <interactant intactId="EBI-719941">
        <id>Q3B820</id>
    </interactant>
    <interactant intactId="EBI-492476">
        <id>Q96RU7</id>
        <label>TRIB3</label>
    </interactant>
    <organismsDiffer>false</organismsDiffer>
    <experiments>3</experiments>
</comment>
<comment type="interaction">
    <interactant intactId="EBI-719941">
        <id>Q3B820</id>
    </interactant>
    <interactant intactId="EBI-2342111">
        <id>Q9C019</id>
        <label>TRIM15</label>
    </interactant>
    <organismsDiffer>false</organismsDiffer>
    <experiments>3</experiments>
</comment>
<comment type="interaction">
    <interactant intactId="EBI-719941">
        <id>Q3B820</id>
    </interactant>
    <interactant intactId="EBI-719493">
        <id>P14373</id>
        <label>TRIM27</label>
    </interactant>
    <organismsDiffer>false</organismsDiffer>
    <experiments>3</experiments>
</comment>
<comment type="interaction">
    <interactant intactId="EBI-719941">
        <id>Q3B820</id>
    </interactant>
    <interactant intactId="EBI-741602">
        <id>O94972</id>
        <label>TRIM37</label>
    </interactant>
    <organismsDiffer>false</organismsDiffer>
    <experiments>3</experiments>
</comment>
<comment type="interaction">
    <interactant intactId="EBI-719941">
        <id>Q3B820</id>
    </interactant>
    <interactant intactId="EBI-725997">
        <id>Q8WV44</id>
        <label>TRIM41</label>
    </interactant>
    <organismsDiffer>false</organismsDiffer>
    <experiments>3</experiments>
</comment>
<comment type="interaction">
    <interactant intactId="EBI-719941">
        <id>Q3B820</id>
    </interactant>
    <interactant intactId="EBI-2130429">
        <id>Q9BYV2</id>
        <label>TRIM54</label>
    </interactant>
    <organismsDiffer>false</organismsDiffer>
    <experiments>6</experiments>
</comment>
<comment type="interaction">
    <interactant intactId="EBI-719941">
        <id>Q3B820</id>
    </interactant>
    <interactant intactId="EBI-11525489">
        <id>Q86WT6-2</id>
        <label>TRIM69</label>
    </interactant>
    <organismsDiffer>false</organismsDiffer>
    <experiments>3</experiments>
</comment>
<comment type="interaction">
    <interactant intactId="EBI-719941">
        <id>Q3B820</id>
    </interactant>
    <interactant intactId="EBI-6116822">
        <id>Q8N3L3</id>
        <label>TXLNB</label>
    </interactant>
    <organismsDiffer>false</organismsDiffer>
    <experiments>3</experiments>
</comment>
<comment type="interaction">
    <interactant intactId="EBI-719941">
        <id>Q3B820</id>
    </interactant>
    <interactant intactId="EBI-353844">
        <id>P08670</id>
        <label>VIM</label>
    </interactant>
    <organismsDiffer>false</organismsDiffer>
    <experiments>3</experiments>
</comment>
<comment type="interaction">
    <interactant intactId="EBI-719941">
        <id>Q3B820</id>
    </interactant>
    <interactant intactId="EBI-2799833">
        <id>Q8N1B4</id>
        <label>VPS52</label>
    </interactant>
    <organismsDiffer>false</organismsDiffer>
    <experiments>3</experiments>
</comment>
<comment type="interaction">
    <interactant intactId="EBI-719941">
        <id>Q3B820</id>
    </interactant>
    <interactant intactId="EBI-2682961">
        <id>Q9Y2K1</id>
        <label>ZBTB1</label>
    </interactant>
    <organismsDiffer>false</organismsDiffer>
    <experiments>6</experiments>
</comment>
<comment type="interaction">
    <interactant intactId="EBI-719941">
        <id>Q3B820</id>
    </interactant>
    <interactant intactId="EBI-10176632">
        <id>O43829</id>
        <label>ZBTB14</label>
    </interactant>
    <organismsDiffer>false</organismsDiffer>
    <experiments>3</experiments>
</comment>
<comment type="interaction">
    <interactant intactId="EBI-719941">
        <id>Q3B820</id>
    </interactant>
    <interactant intactId="EBI-740718">
        <id>O43298</id>
        <label>ZBTB43</label>
    </interactant>
    <organismsDiffer>false</organismsDiffer>
    <experiments>3</experiments>
</comment>
<comment type="interaction">
    <interactant intactId="EBI-719941">
        <id>Q3B820</id>
    </interactant>
    <interactant intactId="EBI-742740">
        <id>Q96BR9</id>
        <label>ZBTB8A</label>
    </interactant>
    <organismsDiffer>false</organismsDiffer>
    <experiments>6</experiments>
</comment>
<comment type="interaction">
    <interactant intactId="EBI-719941">
        <id>Q3B820</id>
    </interactant>
    <interactant intactId="EBI-11962760">
        <id>Q9NZV7</id>
        <label>ZIM2</label>
    </interactant>
    <organismsDiffer>false</organismsDiffer>
    <experiments>3</experiments>
</comment>
<comment type="interaction">
    <interactant intactId="EBI-719941">
        <id>Q3B820</id>
    </interactant>
    <interactant intactId="EBI-707773">
        <id>P17028</id>
        <label>ZNF24</label>
    </interactant>
    <organismsDiffer>false</organismsDiffer>
    <experiments>3</experiments>
</comment>
<comment type="interaction">
    <interactant intactId="EBI-719941">
        <id>Q3B820</id>
    </interactant>
    <interactant intactId="EBI-10177272">
        <id>P15622-3</id>
        <label>ZNF250</label>
    </interactant>
    <organismsDiffer>false</organismsDiffer>
    <experiments>3</experiments>
</comment>
<comment type="interaction">
    <interactant intactId="EBI-719941">
        <id>Q3B820</id>
    </interactant>
    <interactant intactId="EBI-750821">
        <id>Q8N554</id>
        <label>ZNF276</label>
    </interactant>
    <organismsDiffer>false</organismsDiffer>
    <experiments>3</experiments>
</comment>
<comment type="interaction">
    <interactant intactId="EBI-719941">
        <id>Q3B820</id>
    </interactant>
    <interactant intactId="EBI-743265">
        <id>Q9BUY5</id>
        <label>ZNF426</label>
    </interactant>
    <organismsDiffer>false</organismsDiffer>
    <experiments>3</experiments>
</comment>
<comment type="interaction">
    <interactant intactId="EBI-719941">
        <id>Q3B820</id>
    </interactant>
    <interactant intactId="EBI-11035148">
        <id>Q8TF50</id>
        <label>ZNF526</label>
    </interactant>
    <organismsDiffer>false</organismsDiffer>
    <experiments>3</experiments>
</comment>
<comment type="interaction">
    <interactant intactId="EBI-719941">
        <id>Q3B820</id>
    </interactant>
    <interactant intactId="EBI-10240849">
        <id>Q3KQV3</id>
        <label>ZNF792</label>
    </interactant>
    <organismsDiffer>false</organismsDiffer>
    <experiments>3</experiments>
</comment>
<comment type="interaction">
    <interactant intactId="EBI-719941">
        <id>Q3B820</id>
    </interactant>
    <interactant intactId="EBI-527853">
        <id>Q9UGI0</id>
        <label>ZRANB1</label>
    </interactant>
    <organismsDiffer>false</organismsDiffer>
    <experiments>3</experiments>
</comment>
<comment type="interaction">
    <interactant intactId="EBI-719941">
        <id>Q3B820</id>
    </interactant>
    <interactant intactId="EBI-1210440">
        <id>O43309</id>
        <label>ZSCAN12</label>
    </interactant>
    <organismsDiffer>false</organismsDiffer>
    <experiments>3</experiments>
</comment>
<comment type="subcellular location">
    <subcellularLocation>
        <location evidence="7">Cytoplasm</location>
        <location evidence="7">Cytoskeleton</location>
        <location evidence="7">Cilium basal body</location>
    </subcellularLocation>
    <subcellularLocation>
        <location evidence="7">Cell projection</location>
        <location evidence="7">Cilium</location>
    </subcellularLocation>
    <subcellularLocation>
        <location evidence="11 12 14">Cytoplasm</location>
        <location evidence="11 12 14">Cytoskeleton</location>
        <location evidence="11 12 14">Microtubule organizing center</location>
        <location evidence="11 12 14">Centrosome</location>
        <location evidence="11 12 14">Centriole</location>
    </subcellularLocation>
    <text evidence="11 14">Localized to the region between the outer and inner photoreceptor segments, corresponding to the photoreceptor connecting cilium. Localizes to the inner scaffold in the central region of centrioles.</text>
</comment>
<comment type="alternative products">
    <event type="alternative splicing"/>
    <isoform>
        <id>Q3B820-1</id>
        <name>1</name>
        <sequence type="displayed"/>
    </isoform>
    <isoform>
        <id>Q3B820-2</id>
        <name>2</name>
        <sequence type="described" ref="VSP_032935"/>
    </isoform>
    <isoform>
        <id>Q3B820-3</id>
        <name>3</name>
        <sequence type="described" ref="VSP_039126"/>
    </isoform>
</comment>
<comment type="tissue specificity">
    <text evidence="4 5 13">Isoform 1 and isoform 3 are widely expressed with highest levels in retina and testis, with isoform 1 being the most abundant in all tissues tested.</text>
</comment>
<comment type="disease" evidence="4 5 10">
    <disease id="DI-02911">
        <name>Retinitis pigmentosa 28</name>
        <acronym>RP28</acronym>
        <description>A retinal dystrophy belonging to the group of pigmentary retinopathies. Retinitis pigmentosa is characterized by retinal pigment deposits visible on fundus examination and primary loss of rod photoreceptor cells followed by secondary loss of cone photoreceptors. Patients typically have night vision blindness and loss of midperipheral visual field. As their condition progresses, they lose their far peripheral visual field and eventually central vision as well.</description>
        <dbReference type="MIM" id="606068"/>
    </disease>
    <text>The disease is caused by variants affecting the gene represented in this entry.</text>
</comment>
<comment type="similarity">
    <text evidence="17">Belongs to the FAM161 family.</text>
</comment>
<comment type="sequence caution" evidence="17">
    <conflict type="erroneous initiation">
        <sequence resource="EMBL-CDS" id="BAG58969"/>
    </conflict>
    <text>Truncated N-terminus.</text>
</comment>
<protein>
    <recommendedName>
        <fullName>Protein FAM161A</fullName>
    </recommendedName>
</protein>
<organism>
    <name type="scientific">Homo sapiens</name>
    <name type="common">Human</name>
    <dbReference type="NCBI Taxonomy" id="9606"/>
    <lineage>
        <taxon>Eukaryota</taxon>
        <taxon>Metazoa</taxon>
        <taxon>Chordata</taxon>
        <taxon>Craniata</taxon>
        <taxon>Vertebrata</taxon>
        <taxon>Euteleostomi</taxon>
        <taxon>Mammalia</taxon>
        <taxon>Eutheria</taxon>
        <taxon>Euarchontoglires</taxon>
        <taxon>Primates</taxon>
        <taxon>Haplorrhini</taxon>
        <taxon>Catarrhini</taxon>
        <taxon>Hominidae</taxon>
        <taxon>Homo</taxon>
    </lineage>
</organism>
<dbReference type="EMBL" id="BX648834">
    <property type="status" value="NOT_ANNOTATED_CDS"/>
    <property type="molecule type" value="mRNA"/>
</dbReference>
<dbReference type="EMBL" id="BX649029">
    <property type="status" value="NOT_ANNOTATED_CDS"/>
    <property type="molecule type" value="mRNA"/>
</dbReference>
<dbReference type="EMBL" id="AC107081">
    <property type="status" value="NOT_ANNOTATED_CDS"/>
    <property type="molecule type" value="Genomic_DNA"/>
</dbReference>
<dbReference type="EMBL" id="AK023367">
    <property type="protein sequence ID" value="BAB14544.1"/>
    <property type="molecule type" value="mRNA"/>
</dbReference>
<dbReference type="EMBL" id="AK296255">
    <property type="protein sequence ID" value="BAG58969.1"/>
    <property type="status" value="ALT_INIT"/>
    <property type="molecule type" value="mRNA"/>
</dbReference>
<dbReference type="EMBL" id="BC107162">
    <property type="status" value="NOT_ANNOTATED_CDS"/>
    <property type="molecule type" value="mRNA"/>
</dbReference>
<dbReference type="EMBL" id="BC107163">
    <property type="status" value="NOT_ANNOTATED_CDS"/>
    <property type="molecule type" value="mRNA"/>
</dbReference>
<dbReference type="CCDS" id="CCDS42687.2">
    <molecule id="Q3B820-1"/>
</dbReference>
<dbReference type="CCDS" id="CCDS56120.1">
    <molecule id="Q3B820-3"/>
</dbReference>
<dbReference type="RefSeq" id="NP_001188472.1">
    <molecule id="Q3B820-3"/>
    <property type="nucleotide sequence ID" value="NM_001201543.2"/>
</dbReference>
<dbReference type="RefSeq" id="NP_115556.2">
    <molecule id="Q3B820-1"/>
    <property type="nucleotide sequence ID" value="NM_032180.3"/>
</dbReference>
<dbReference type="RefSeq" id="XP_016860561.1">
    <property type="nucleotide sequence ID" value="XM_017005072.1"/>
</dbReference>
<dbReference type="SMR" id="Q3B820"/>
<dbReference type="BioGRID" id="123909">
    <property type="interactions" value="159"/>
</dbReference>
<dbReference type="FunCoup" id="Q3B820">
    <property type="interactions" value="378"/>
</dbReference>
<dbReference type="IntAct" id="Q3B820">
    <property type="interactions" value="154"/>
</dbReference>
<dbReference type="MINT" id="Q3B820"/>
<dbReference type="STRING" id="9606.ENSP00000385158"/>
<dbReference type="GlyGen" id="Q3B820">
    <property type="glycosylation" value="2 sites, 1 O-linked glycan (1 site)"/>
</dbReference>
<dbReference type="iPTMnet" id="Q3B820"/>
<dbReference type="PhosphoSitePlus" id="Q3B820"/>
<dbReference type="BioMuta" id="FAM161A"/>
<dbReference type="DMDM" id="182705173"/>
<dbReference type="jPOST" id="Q3B820"/>
<dbReference type="MassIVE" id="Q3B820"/>
<dbReference type="PaxDb" id="9606-ENSP00000385158"/>
<dbReference type="PeptideAtlas" id="Q3B820"/>
<dbReference type="ProteomicsDB" id="61665">
    <molecule id="Q3B820-1"/>
</dbReference>
<dbReference type="ProteomicsDB" id="61666">
    <molecule id="Q3B820-2"/>
</dbReference>
<dbReference type="ProteomicsDB" id="61667">
    <molecule id="Q3B820-3"/>
</dbReference>
<dbReference type="Antibodypedia" id="30688">
    <property type="antibodies" value="74 antibodies from 10 providers"/>
</dbReference>
<dbReference type="DNASU" id="84140"/>
<dbReference type="Ensembl" id="ENST00000404929.6">
    <molecule id="Q3B820-3"/>
    <property type="protein sequence ID" value="ENSP00000385158.1"/>
    <property type="gene ID" value="ENSG00000170264.13"/>
</dbReference>
<dbReference type="Ensembl" id="ENST00000405894.3">
    <molecule id="Q3B820-1"/>
    <property type="protein sequence ID" value="ENSP00000385893.3"/>
    <property type="gene ID" value="ENSG00000170264.13"/>
</dbReference>
<dbReference type="GeneID" id="84140"/>
<dbReference type="KEGG" id="hsa:84140"/>
<dbReference type="MANE-Select" id="ENST00000404929.6">
    <molecule id="Q3B820-3"/>
    <property type="protein sequence ID" value="ENSP00000385158.1"/>
    <property type="RefSeq nucleotide sequence ID" value="NM_001201543.2"/>
    <property type="RefSeq protein sequence ID" value="NP_001188472.1"/>
</dbReference>
<dbReference type="UCSC" id="uc002sbm.5">
    <molecule id="Q3B820-1"/>
    <property type="organism name" value="human"/>
</dbReference>
<dbReference type="AGR" id="HGNC:25808"/>
<dbReference type="CTD" id="84140"/>
<dbReference type="DisGeNET" id="84140"/>
<dbReference type="GeneCards" id="FAM161A"/>
<dbReference type="GeneReviews" id="FAM161A"/>
<dbReference type="HGNC" id="HGNC:25808">
    <property type="gene designation" value="FAM161A"/>
</dbReference>
<dbReference type="HPA" id="ENSG00000170264">
    <property type="expression patterns" value="Tissue enriched (retina)"/>
</dbReference>
<dbReference type="MalaCards" id="FAM161A"/>
<dbReference type="MIM" id="606068">
    <property type="type" value="phenotype"/>
</dbReference>
<dbReference type="MIM" id="613596">
    <property type="type" value="gene"/>
</dbReference>
<dbReference type="neXtProt" id="NX_Q3B820"/>
<dbReference type="OpenTargets" id="ENSG00000170264"/>
<dbReference type="Orphanet" id="791">
    <property type="disease" value="Retinitis pigmentosa"/>
</dbReference>
<dbReference type="PharmGKB" id="PA162386876"/>
<dbReference type="VEuPathDB" id="HostDB:ENSG00000170264"/>
<dbReference type="eggNOG" id="ENOG502QRC3">
    <property type="taxonomic scope" value="Eukaryota"/>
</dbReference>
<dbReference type="GeneTree" id="ENSGT00940000157824"/>
<dbReference type="HOGENOM" id="CLU_010955_0_1_1"/>
<dbReference type="InParanoid" id="Q3B820"/>
<dbReference type="OMA" id="EVTECQR"/>
<dbReference type="OrthoDB" id="2150121at2759"/>
<dbReference type="PAN-GO" id="Q3B820">
    <property type="GO annotations" value="3 GO annotations based on evolutionary models"/>
</dbReference>
<dbReference type="PhylomeDB" id="Q3B820"/>
<dbReference type="TreeFam" id="TF321199"/>
<dbReference type="PathwayCommons" id="Q3B820"/>
<dbReference type="SignaLink" id="Q3B820"/>
<dbReference type="BioGRID-ORCS" id="84140">
    <property type="hits" value="14 hits in 1155 CRISPR screens"/>
</dbReference>
<dbReference type="CD-CODE" id="8C2F96ED">
    <property type="entry name" value="Centrosome"/>
</dbReference>
<dbReference type="ChiTaRS" id="FAM161A">
    <property type="organism name" value="human"/>
</dbReference>
<dbReference type="GenomeRNAi" id="84140"/>
<dbReference type="Pharos" id="Q3B820">
    <property type="development level" value="Tbio"/>
</dbReference>
<dbReference type="PRO" id="PR:Q3B820"/>
<dbReference type="Proteomes" id="UP000005640">
    <property type="component" value="Chromosome 2"/>
</dbReference>
<dbReference type="RNAct" id="Q3B820">
    <property type="molecule type" value="protein"/>
</dbReference>
<dbReference type="Bgee" id="ENSG00000170264">
    <property type="expression patterns" value="Expressed in pigmented layer of retina and 146 other cell types or tissues"/>
</dbReference>
<dbReference type="ExpressionAtlas" id="Q3B820">
    <property type="expression patterns" value="baseline and differential"/>
</dbReference>
<dbReference type="GO" id="GO:0000235">
    <property type="term" value="C:astral microtubule"/>
    <property type="evidence" value="ECO:0000314"/>
    <property type="project" value="UniProtKB"/>
</dbReference>
<dbReference type="GO" id="GO:0005814">
    <property type="term" value="C:centriole"/>
    <property type="evidence" value="ECO:0000314"/>
    <property type="project" value="UniProtKB"/>
</dbReference>
<dbReference type="GO" id="GO:0005813">
    <property type="term" value="C:centrosome"/>
    <property type="evidence" value="ECO:0000314"/>
    <property type="project" value="HPA"/>
</dbReference>
<dbReference type="GO" id="GO:0036064">
    <property type="term" value="C:ciliary basal body"/>
    <property type="evidence" value="ECO:0000314"/>
    <property type="project" value="HPA"/>
</dbReference>
<dbReference type="GO" id="GO:0005829">
    <property type="term" value="C:cytosol"/>
    <property type="evidence" value="ECO:0000314"/>
    <property type="project" value="HPA"/>
</dbReference>
<dbReference type="GO" id="GO:0005794">
    <property type="term" value="C:Golgi apparatus"/>
    <property type="evidence" value="ECO:0000314"/>
    <property type="project" value="HPA"/>
</dbReference>
<dbReference type="GO" id="GO:0072686">
    <property type="term" value="C:mitotic spindle"/>
    <property type="evidence" value="ECO:0000314"/>
    <property type="project" value="UniProtKB"/>
</dbReference>
<dbReference type="GO" id="GO:0097431">
    <property type="term" value="C:mitotic spindle pole"/>
    <property type="evidence" value="ECO:0000314"/>
    <property type="project" value="UniProtKB"/>
</dbReference>
<dbReference type="GO" id="GO:0005654">
    <property type="term" value="C:nucleoplasm"/>
    <property type="evidence" value="ECO:0000314"/>
    <property type="project" value="HPA"/>
</dbReference>
<dbReference type="GO" id="GO:0032391">
    <property type="term" value="C:photoreceptor connecting cilium"/>
    <property type="evidence" value="ECO:0000314"/>
    <property type="project" value="UniProtKB"/>
</dbReference>
<dbReference type="GO" id="GO:0001917">
    <property type="term" value="C:photoreceptor inner segment"/>
    <property type="evidence" value="ECO:0000314"/>
    <property type="project" value="UniProtKB"/>
</dbReference>
<dbReference type="GO" id="GO:0005876">
    <property type="term" value="C:spindle microtubule"/>
    <property type="evidence" value="ECO:0000314"/>
    <property type="project" value="UniProtKB"/>
</dbReference>
<dbReference type="GO" id="GO:0042802">
    <property type="term" value="F:identical protein binding"/>
    <property type="evidence" value="ECO:0000314"/>
    <property type="project" value="UniProtKB"/>
</dbReference>
<dbReference type="GO" id="GO:0008017">
    <property type="term" value="F:microtubule binding"/>
    <property type="evidence" value="ECO:0000315"/>
    <property type="project" value="UniProtKB"/>
</dbReference>
<dbReference type="GO" id="GO:0060271">
    <property type="term" value="P:cilium assembly"/>
    <property type="evidence" value="ECO:0000315"/>
    <property type="project" value="UniProtKB"/>
</dbReference>
<dbReference type="GO" id="GO:0044782">
    <property type="term" value="P:cilium organization"/>
    <property type="evidence" value="ECO:0000318"/>
    <property type="project" value="GO_Central"/>
</dbReference>
<dbReference type="GO" id="GO:1901985">
    <property type="term" value="P:positive regulation of protein acetylation"/>
    <property type="evidence" value="ECO:0000314"/>
    <property type="project" value="UniProtKB"/>
</dbReference>
<dbReference type="GO" id="GO:0007601">
    <property type="term" value="P:visual perception"/>
    <property type="evidence" value="ECO:0007669"/>
    <property type="project" value="UniProtKB-KW"/>
</dbReference>
<dbReference type="InterPro" id="IPR051655">
    <property type="entry name" value="FAM161"/>
</dbReference>
<dbReference type="InterPro" id="IPR019579">
    <property type="entry name" value="FAM161A/B"/>
</dbReference>
<dbReference type="PANTHER" id="PTHR21501">
    <property type="entry name" value="PROTEIN FAM-161"/>
    <property type="match status" value="1"/>
</dbReference>
<dbReference type="PANTHER" id="PTHR21501:SF3">
    <property type="entry name" value="PROTEIN FAM161A"/>
    <property type="match status" value="1"/>
</dbReference>
<dbReference type="Pfam" id="PF10595">
    <property type="entry name" value="FAM161A_B"/>
    <property type="match status" value="1"/>
</dbReference>
<feature type="chain" id="PRO_0000329052" description="Protein FAM161A">
    <location>
        <begin position="1"/>
        <end position="660"/>
    </location>
</feature>
<feature type="region of interest" description="Required for interaction with CFAP418" evidence="13">
    <location>
        <begin position="341"/>
        <end position="525"/>
    </location>
</feature>
<feature type="region of interest" description="Disordered" evidence="2">
    <location>
        <begin position="605"/>
        <end position="660"/>
    </location>
</feature>
<feature type="coiled-coil region" evidence="1">
    <location>
        <begin position="93"/>
        <end position="120"/>
    </location>
</feature>
<feature type="coiled-coil region" evidence="1">
    <location>
        <begin position="296"/>
        <end position="320"/>
    </location>
</feature>
<feature type="coiled-coil region" evidence="1">
    <location>
        <begin position="522"/>
        <end position="552"/>
    </location>
</feature>
<feature type="compositionally biased region" description="Basic and acidic residues" evidence="2">
    <location>
        <begin position="606"/>
        <end position="623"/>
    </location>
</feature>
<feature type="compositionally biased region" description="Acidic residues" evidence="2">
    <location>
        <begin position="645"/>
        <end position="660"/>
    </location>
</feature>
<feature type="cross-link" description="Glycyl lysine isopeptide (Lys-Gly) (interchain with G-Cter in SUMO2)" evidence="18">
    <location>
        <position position="468"/>
    </location>
</feature>
<feature type="cross-link" description="Glycyl lysine isopeptide (Lys-Gly) (interchain with G-Cter in SUMO2)" evidence="18">
    <location>
        <position position="484"/>
    </location>
</feature>
<feature type="splice variant" id="VSP_032935" description="In isoform 2." evidence="15">
    <location>
        <begin position="1"/>
        <end position="109"/>
    </location>
</feature>
<feature type="splice variant" id="VSP_039126" description="In isoform 3." evidence="16">
    <original>V</original>
    <variation>VRRSLEEKKMLEEERNRILTKQKQRMKELQKLLTTRAKAYDSHQSLAQISKSRVKCL</variation>
    <location>
        <position position="527"/>
    </location>
</feature>
<feature type="sequence variant" id="VAR_060180" description="In dbSNP:rs11125895." evidence="3">
    <original>I</original>
    <variation>M</variation>
    <location>
        <position position="107"/>
    </location>
</feature>
<feature type="sequence variant" id="VAR_042630" description="In dbSNP:rs17513722.">
    <original>I</original>
    <variation>V</variation>
    <location>
        <position position="236"/>
    </location>
</feature>
<feature type="sequence variant" id="VAR_042631" description="In dbSNP:rs6733774.">
    <original>E</original>
    <variation>K</variation>
    <location>
        <position position="273"/>
    </location>
</feature>
<feature type="sequence variant" id="VAR_083934" description="In RP28." evidence="10">
    <location>
        <begin position="315"/>
        <end position="660"/>
    </location>
</feature>
<feature type="sequence conflict" description="In Ref. 1; BX648834." evidence="17" ref="1">
    <original>E</original>
    <variation>G</variation>
    <location>
        <position position="145"/>
    </location>
</feature>
<feature type="sequence conflict" description="In Ref. 3; BAB14544." evidence="17" ref="3">
    <original>S</original>
    <variation>F</variation>
    <location>
        <position position="167"/>
    </location>
</feature>
<feature type="sequence conflict" description="In Ref. 3; BAG58969." evidence="17" ref="3">
    <original>R</original>
    <variation>M</variation>
    <location>
        <position position="534"/>
    </location>
</feature>
<gene>
    <name type="primary">FAM161A</name>
</gene>
<evidence type="ECO:0000255" key="1"/>
<evidence type="ECO:0000256" key="2">
    <source>
        <dbReference type="SAM" id="MobiDB-lite"/>
    </source>
</evidence>
<evidence type="ECO:0000269" key="3">
    <source>
    </source>
</evidence>
<evidence type="ECO:0000269" key="4">
    <source>
    </source>
</evidence>
<evidence type="ECO:0000269" key="5">
    <source>
    </source>
</evidence>
<evidence type="ECO:0000269" key="6">
    <source>
    </source>
</evidence>
<evidence type="ECO:0000269" key="7">
    <source>
    </source>
</evidence>
<evidence type="ECO:0000269" key="8">
    <source>
    </source>
</evidence>
<evidence type="ECO:0000269" key="9">
    <source>
    </source>
</evidence>
<evidence type="ECO:0000269" key="10">
    <source>
    </source>
</evidence>
<evidence type="ECO:0000269" key="11">
    <source>
    </source>
</evidence>
<evidence type="ECO:0000269" key="12">
    <source>
    </source>
</evidence>
<evidence type="ECO:0000269" key="13">
    <source>
    </source>
</evidence>
<evidence type="ECO:0000269" key="14">
    <source>
    </source>
</evidence>
<evidence type="ECO:0000303" key="15">
    <source>
    </source>
</evidence>
<evidence type="ECO:0000303" key="16">
    <source>
    </source>
</evidence>
<evidence type="ECO:0000305" key="17"/>
<evidence type="ECO:0007744" key="18">
    <source>
    </source>
</evidence>
<sequence>MATSHRVAKLVASSLQTPVNPITGARVAQYEREDPLKALAAAEAILEDEEEEKVAQPAGASADLNTSFSGVDEHAPISYEDFVNFPDIHHSNEEYFKKVEELKAAHIETMAKLEKMYQDKLHLKEVQPVVIREDSLSDSSRSVSEKNSYHPVSLMTSFSEPDLGQSSSLYVSSSEEELPNLEKEYPRKNRMMTYAKELINNMWTDFCVEDYIRCKDTGFHAAEKRRKKRKEWVPTITVPEPFQMMIREQKKKEESMKSKSDIEMVHKALKKQEEDPEYKKKFRANPVPASVFLPLYHDLVKQKEERRRSLKEKSKEALLASQKPFKFIAREEQKRAAREKQLRDFLKYKKKTNRFKARPIPRSTYGSTTNDKLKEEELYRNLRTQLRAQEHLQNSSPLPCRSACGCRNPRCPEQAVKLKCKHKVRCPTPDFEDLPERYQKHLSEHKSPKLLTVCKPFDLHASPHASIKREKILADIEADEENLKETRWPYLSPRRKSPVRCAGVNPVPCNCNPPVPTVSSRGREQAVRKSEKERMREYQRELEEREEKLKKRPLLFERVAQKNARMAAEKHYSNTLKALGISDEFVSKKGQSGKVLEYFNNQETKSVTEDKESFNEEEKIEERENGEENYFIDTNSQDSYKEKDEANEESEEEKSVEESH</sequence>
<reference key="1">
    <citation type="journal article" date="2007" name="BMC Genomics">
        <title>The full-ORF clone resource of the German cDNA consortium.</title>
        <authorList>
            <person name="Bechtel S."/>
            <person name="Rosenfelder H."/>
            <person name="Duda A."/>
            <person name="Schmidt C.P."/>
            <person name="Ernst U."/>
            <person name="Wellenreuther R."/>
            <person name="Mehrle A."/>
            <person name="Schuster C."/>
            <person name="Bahr A."/>
            <person name="Bloecker H."/>
            <person name="Heubner D."/>
            <person name="Hoerlein A."/>
            <person name="Michel G."/>
            <person name="Wedler H."/>
            <person name="Koehrer K."/>
            <person name="Ottenwaelder B."/>
            <person name="Poustka A."/>
            <person name="Wiemann S."/>
            <person name="Schupp I."/>
        </authorList>
    </citation>
    <scope>NUCLEOTIDE SEQUENCE [LARGE SCALE MRNA] (ISOFORMS 1 AND 3)</scope>
    <scope>VARIANT MET-107</scope>
    <source>
        <tissue>Colon endothelium</tissue>
        <tissue>Retina</tissue>
    </source>
</reference>
<reference key="2">
    <citation type="journal article" date="2005" name="Nature">
        <title>Generation and annotation of the DNA sequences of human chromosomes 2 and 4.</title>
        <authorList>
            <person name="Hillier L.W."/>
            <person name="Graves T.A."/>
            <person name="Fulton R.S."/>
            <person name="Fulton L.A."/>
            <person name="Pepin K.H."/>
            <person name="Minx P."/>
            <person name="Wagner-McPherson C."/>
            <person name="Layman D."/>
            <person name="Wylie K."/>
            <person name="Sekhon M."/>
            <person name="Becker M.C."/>
            <person name="Fewell G.A."/>
            <person name="Delehaunty K.D."/>
            <person name="Miner T.L."/>
            <person name="Nash W.E."/>
            <person name="Kremitzki C."/>
            <person name="Oddy L."/>
            <person name="Du H."/>
            <person name="Sun H."/>
            <person name="Bradshaw-Cordum H."/>
            <person name="Ali J."/>
            <person name="Carter J."/>
            <person name="Cordes M."/>
            <person name="Harris A."/>
            <person name="Isak A."/>
            <person name="van Brunt A."/>
            <person name="Nguyen C."/>
            <person name="Du F."/>
            <person name="Courtney L."/>
            <person name="Kalicki J."/>
            <person name="Ozersky P."/>
            <person name="Abbott S."/>
            <person name="Armstrong J."/>
            <person name="Belter E.A."/>
            <person name="Caruso L."/>
            <person name="Cedroni M."/>
            <person name="Cotton M."/>
            <person name="Davidson T."/>
            <person name="Desai A."/>
            <person name="Elliott G."/>
            <person name="Erb T."/>
            <person name="Fronick C."/>
            <person name="Gaige T."/>
            <person name="Haakenson W."/>
            <person name="Haglund K."/>
            <person name="Holmes A."/>
            <person name="Harkins R."/>
            <person name="Kim K."/>
            <person name="Kruchowski S.S."/>
            <person name="Strong C.M."/>
            <person name="Grewal N."/>
            <person name="Goyea E."/>
            <person name="Hou S."/>
            <person name="Levy A."/>
            <person name="Martinka S."/>
            <person name="Mead K."/>
            <person name="McLellan M.D."/>
            <person name="Meyer R."/>
            <person name="Randall-Maher J."/>
            <person name="Tomlinson C."/>
            <person name="Dauphin-Kohlberg S."/>
            <person name="Kozlowicz-Reilly A."/>
            <person name="Shah N."/>
            <person name="Swearengen-Shahid S."/>
            <person name="Snider J."/>
            <person name="Strong J.T."/>
            <person name="Thompson J."/>
            <person name="Yoakum M."/>
            <person name="Leonard S."/>
            <person name="Pearman C."/>
            <person name="Trani L."/>
            <person name="Radionenko M."/>
            <person name="Waligorski J.E."/>
            <person name="Wang C."/>
            <person name="Rock S.M."/>
            <person name="Tin-Wollam A.-M."/>
            <person name="Maupin R."/>
            <person name="Latreille P."/>
            <person name="Wendl M.C."/>
            <person name="Yang S.-P."/>
            <person name="Pohl C."/>
            <person name="Wallis J.W."/>
            <person name="Spieth J."/>
            <person name="Bieri T.A."/>
            <person name="Berkowicz N."/>
            <person name="Nelson J.O."/>
            <person name="Osborne J."/>
            <person name="Ding L."/>
            <person name="Meyer R."/>
            <person name="Sabo A."/>
            <person name="Shotland Y."/>
            <person name="Sinha P."/>
            <person name="Wohldmann P.E."/>
            <person name="Cook L.L."/>
            <person name="Hickenbotham M.T."/>
            <person name="Eldred J."/>
            <person name="Williams D."/>
            <person name="Jones T.A."/>
            <person name="She X."/>
            <person name="Ciccarelli F.D."/>
            <person name="Izaurralde E."/>
            <person name="Taylor J."/>
            <person name="Schmutz J."/>
            <person name="Myers R.M."/>
            <person name="Cox D.R."/>
            <person name="Huang X."/>
            <person name="McPherson J.D."/>
            <person name="Mardis E.R."/>
            <person name="Clifton S.W."/>
            <person name="Warren W.C."/>
            <person name="Chinwalla A.T."/>
            <person name="Eddy S.R."/>
            <person name="Marra M.A."/>
            <person name="Ovcharenko I."/>
            <person name="Furey T.S."/>
            <person name="Miller W."/>
            <person name="Eichler E.E."/>
            <person name="Bork P."/>
            <person name="Suyama M."/>
            <person name="Torrents D."/>
            <person name="Waterston R.H."/>
            <person name="Wilson R.K."/>
        </authorList>
    </citation>
    <scope>NUCLEOTIDE SEQUENCE [LARGE SCALE GENOMIC DNA]</scope>
</reference>
<reference key="3">
    <citation type="journal article" date="2004" name="Nat. Genet.">
        <title>Complete sequencing and characterization of 21,243 full-length human cDNAs.</title>
        <authorList>
            <person name="Ota T."/>
            <person name="Suzuki Y."/>
            <person name="Nishikawa T."/>
            <person name="Otsuki T."/>
            <person name="Sugiyama T."/>
            <person name="Irie R."/>
            <person name="Wakamatsu A."/>
            <person name="Hayashi K."/>
            <person name="Sato H."/>
            <person name="Nagai K."/>
            <person name="Kimura K."/>
            <person name="Makita H."/>
            <person name="Sekine M."/>
            <person name="Obayashi M."/>
            <person name="Nishi T."/>
            <person name="Shibahara T."/>
            <person name="Tanaka T."/>
            <person name="Ishii S."/>
            <person name="Yamamoto J."/>
            <person name="Saito K."/>
            <person name="Kawai Y."/>
            <person name="Isono Y."/>
            <person name="Nakamura Y."/>
            <person name="Nagahari K."/>
            <person name="Murakami K."/>
            <person name="Yasuda T."/>
            <person name="Iwayanagi T."/>
            <person name="Wagatsuma M."/>
            <person name="Shiratori A."/>
            <person name="Sudo H."/>
            <person name="Hosoiri T."/>
            <person name="Kaku Y."/>
            <person name="Kodaira H."/>
            <person name="Kondo H."/>
            <person name="Sugawara M."/>
            <person name="Takahashi M."/>
            <person name="Kanda K."/>
            <person name="Yokoi T."/>
            <person name="Furuya T."/>
            <person name="Kikkawa E."/>
            <person name="Omura Y."/>
            <person name="Abe K."/>
            <person name="Kamihara K."/>
            <person name="Katsuta N."/>
            <person name="Sato K."/>
            <person name="Tanikawa M."/>
            <person name="Yamazaki M."/>
            <person name="Ninomiya K."/>
            <person name="Ishibashi T."/>
            <person name="Yamashita H."/>
            <person name="Murakawa K."/>
            <person name="Fujimori K."/>
            <person name="Tanai H."/>
            <person name="Kimata M."/>
            <person name="Watanabe M."/>
            <person name="Hiraoka S."/>
            <person name="Chiba Y."/>
            <person name="Ishida S."/>
            <person name="Ono Y."/>
            <person name="Takiguchi S."/>
            <person name="Watanabe S."/>
            <person name="Yosida M."/>
            <person name="Hotuta T."/>
            <person name="Kusano J."/>
            <person name="Kanehori K."/>
            <person name="Takahashi-Fujii A."/>
            <person name="Hara H."/>
            <person name="Tanase T.-O."/>
            <person name="Nomura Y."/>
            <person name="Togiya S."/>
            <person name="Komai F."/>
            <person name="Hara R."/>
            <person name="Takeuchi K."/>
            <person name="Arita M."/>
            <person name="Imose N."/>
            <person name="Musashino K."/>
            <person name="Yuuki H."/>
            <person name="Oshima A."/>
            <person name="Sasaki N."/>
            <person name="Aotsuka S."/>
            <person name="Yoshikawa Y."/>
            <person name="Matsunawa H."/>
            <person name="Ichihara T."/>
            <person name="Shiohata N."/>
            <person name="Sano S."/>
            <person name="Moriya S."/>
            <person name="Momiyama H."/>
            <person name="Satoh N."/>
            <person name="Takami S."/>
            <person name="Terashima Y."/>
            <person name="Suzuki O."/>
            <person name="Nakagawa S."/>
            <person name="Senoh A."/>
            <person name="Mizoguchi H."/>
            <person name="Goto Y."/>
            <person name="Shimizu F."/>
            <person name="Wakebe H."/>
            <person name="Hishigaki H."/>
            <person name="Watanabe T."/>
            <person name="Sugiyama A."/>
            <person name="Takemoto M."/>
            <person name="Kawakami B."/>
            <person name="Yamazaki M."/>
            <person name="Watanabe K."/>
            <person name="Kumagai A."/>
            <person name="Itakura S."/>
            <person name="Fukuzumi Y."/>
            <person name="Fujimori Y."/>
            <person name="Komiyama M."/>
            <person name="Tashiro H."/>
            <person name="Tanigami A."/>
            <person name="Fujiwara T."/>
            <person name="Ono T."/>
            <person name="Yamada K."/>
            <person name="Fujii Y."/>
            <person name="Ozaki K."/>
            <person name="Hirao M."/>
            <person name="Ohmori Y."/>
            <person name="Kawabata A."/>
            <person name="Hikiji T."/>
            <person name="Kobatake N."/>
            <person name="Inagaki H."/>
            <person name="Ikema Y."/>
            <person name="Okamoto S."/>
            <person name="Okitani R."/>
            <person name="Kawakami T."/>
            <person name="Noguchi S."/>
            <person name="Itoh T."/>
            <person name="Shigeta K."/>
            <person name="Senba T."/>
            <person name="Matsumura K."/>
            <person name="Nakajima Y."/>
            <person name="Mizuno T."/>
            <person name="Morinaga M."/>
            <person name="Sasaki M."/>
            <person name="Togashi T."/>
            <person name="Oyama M."/>
            <person name="Hata H."/>
            <person name="Watanabe M."/>
            <person name="Komatsu T."/>
            <person name="Mizushima-Sugano J."/>
            <person name="Satoh T."/>
            <person name="Shirai Y."/>
            <person name="Takahashi Y."/>
            <person name="Nakagawa K."/>
            <person name="Okumura K."/>
            <person name="Nagase T."/>
            <person name="Nomura N."/>
            <person name="Kikuchi H."/>
            <person name="Masuho Y."/>
            <person name="Yamashita R."/>
            <person name="Nakai K."/>
            <person name="Yada T."/>
            <person name="Nakamura Y."/>
            <person name="Ohara O."/>
            <person name="Isogai T."/>
            <person name="Sugano S."/>
        </authorList>
    </citation>
    <scope>NUCLEOTIDE SEQUENCE [LARGE SCALE MRNA] OF 1-545 (ISOFORM 2)</scope>
    <scope>NUCLEOTIDE SEQUENCE [LARGE SCALE MRNA] OF 123-660 (ISOFORMS 1/2)</scope>
    <source>
        <tissue>Ovary</tissue>
        <tissue>Thalamus</tissue>
    </source>
</reference>
<reference key="4">
    <citation type="journal article" date="2004" name="Genome Res.">
        <title>The status, quality, and expansion of the NIH full-length cDNA project: the Mammalian Gene Collection (MGC).</title>
        <authorList>
            <consortium name="The MGC Project Team"/>
        </authorList>
    </citation>
    <scope>NUCLEOTIDE SEQUENCE [LARGE SCALE MRNA] OF 43-660 (ISOFORM 1)</scope>
</reference>
<reference key="5">
    <citation type="journal article" date="2003" name="Nature">
        <title>Proteomic characterization of the human centrosome by protein correlation profiling.</title>
        <authorList>
            <person name="Andersen J.S."/>
            <person name="Wilkinson C.J."/>
            <person name="Mayor T."/>
            <person name="Mortensen P."/>
            <person name="Nigg E.A."/>
            <person name="Mann M."/>
        </authorList>
    </citation>
    <scope>IDENTIFICATION BY MASS SPECTROMETRY</scope>
    <source>
        <tissue>Lymphoblast</tissue>
    </source>
</reference>
<reference key="6">
    <citation type="journal article" date="2010" name="Am. J. Hum. Genet.">
        <title>Nonsense mutations in FAM161A cause RP28-associated recessive retinitis pigmentosa.</title>
        <authorList>
            <person name="Langmann T."/>
            <person name="Di Gioia S.A."/>
            <person name="Rau I."/>
            <person name="Stohr H."/>
            <person name="Maksimovic N.S."/>
            <person name="Corbo J.C."/>
            <person name="Renner A.B."/>
            <person name="Zrenner E."/>
            <person name="Kumaramanickavel G."/>
            <person name="Karlstetter M."/>
            <person name="Arsenijevic Y."/>
            <person name="Weber B.H."/>
            <person name="Gal A."/>
            <person name="Rivolta C."/>
        </authorList>
    </citation>
    <scope>INVOLVEMENT IN RP28</scope>
    <scope>TISSUE SPECIFICITY</scope>
</reference>
<reference key="7">
    <citation type="journal article" date="2010" name="Am. J. Hum. Genet.">
        <title>Homozygosity mapping reveals null mutations in FAM161A as a cause of autosomal-recessive retinitis pigmentosa.</title>
        <authorList>
            <person name="Bandah-Rozenfeld D."/>
            <person name="Mizrahi-Meissonnier L."/>
            <person name="Farhy C."/>
            <person name="Obolensky A."/>
            <person name="Chowers I."/>
            <person name="Pe'er J."/>
            <person name="Merin S."/>
            <person name="Ben-Yosef T."/>
            <person name="Ashery-Padan R."/>
            <person name="Banin E."/>
            <person name="Sharon D."/>
        </authorList>
    </citation>
    <scope>INVOLVEMENT IN RP28</scope>
    <scope>TISSUE SPECIFICITY</scope>
</reference>
<reference key="8">
    <citation type="journal article" date="2012" name="Hum. Mol. Genet.">
        <title>FAM161A, associated with retinitis pigmentosa, is a component of the cilia-basal body complex and interacts with proteins involved in ciliopathies.</title>
        <authorList>
            <person name="Di Gioia S.A."/>
            <person name="Letteboer S.J."/>
            <person name="Kostic C."/>
            <person name="Bandah-Rozenfeld D."/>
            <person name="Hetterschijt L."/>
            <person name="Sharon D."/>
            <person name="Arsenijevic Y."/>
            <person name="Roepman R."/>
            <person name="Rivolta C."/>
        </authorList>
    </citation>
    <scope>FUNCTION</scope>
    <scope>SUBCELLULAR LOCATION</scope>
    <scope>INTERACTION WITH LCA5; CEP290 AND SDCCAG8</scope>
</reference>
<reference key="9">
    <citation type="journal article" date="2012" name="Hum. Mol. Genet.">
        <title>The retinitis pigmentosa 28 protein FAM161A is a novel ciliary protein involved in intermolecular protein interaction and microtubule association.</title>
        <authorList>
            <person name="Zach F."/>
            <person name="Grassmann F."/>
            <person name="Langmann T."/>
            <person name="Sorusch N."/>
            <person name="Wolfrum U."/>
            <person name="Stohr H."/>
        </authorList>
    </citation>
    <scope>INTERACTION WITH MICROTUBULES AND FAM161B</scope>
</reference>
<reference key="10">
    <citation type="journal article" date="2014" name="Am. J. Hum. Genet.">
        <title>Disruption of the basal body protein POC1B results in autosomal-recessive cone-rod dystrophy.</title>
        <authorList>
            <person name="Roosing S."/>
            <person name="Lamers I.J."/>
            <person name="de Vrieze E."/>
            <person name="van den Born L.I."/>
            <person name="Lambertus S."/>
            <person name="Arts H.H."/>
            <person name="Peters T.A."/>
            <person name="Hoyng C.B."/>
            <person name="Kremer H."/>
            <person name="Hetterschijt L."/>
            <person name="Letteboer S.J."/>
            <person name="van Wijk E."/>
            <person name="Roepman R."/>
            <person name="den Hollander A.I."/>
            <person name="Cremers F.P."/>
            <person name="Boldt K."/>
            <person name="de Baere E."/>
            <person name="Klaver C.C."/>
            <person name="Coppieters F."/>
            <person name="Koolen D.A."/>
            <person name="Lugtenberg D."/>
            <person name="Neveling K."/>
            <person name="van Reeuwijk J."/>
            <person name="Ueffing M."/>
            <person name="van Beersum S.E."/>
            <person name="Zonneveld-Vrieling M.N."/>
        </authorList>
    </citation>
    <scope>INTERACTION WITH POC1B</scope>
</reference>
<reference key="11">
    <citation type="journal article" date="2016" name="Am. J. Hum. Genet.">
        <title>Mutations in CEP78 cause cone-rod dystrophy and hearing loss associated with primary-cilia defects.</title>
        <authorList>
            <person name="Nikopoulos K."/>
            <person name="Farinelli P."/>
            <person name="Giangreco B."/>
            <person name="Tsika C."/>
            <person name="Royer-Bertrand B."/>
            <person name="Mbefo M.K."/>
            <person name="Bedoni N."/>
            <person name="Kjellstroem U."/>
            <person name="El Zaoui I."/>
            <person name="Di Gioia S.A."/>
            <person name="Balzano S."/>
            <person name="Cisarova K."/>
            <person name="Messina A."/>
            <person name="Decembrini S."/>
            <person name="Plainis S."/>
            <person name="Blazaki S.V."/>
            <person name="Khan M.I."/>
            <person name="Micheal S."/>
            <person name="Boldt K."/>
            <person name="Ueffing M."/>
            <person name="Moulin A.P."/>
            <person name="Cremers F.P."/>
            <person name="Roepman R."/>
            <person name="Arsenijevic Y."/>
            <person name="Tsilimbaris M.K."/>
            <person name="Andreasson S."/>
            <person name="Rivolta C."/>
        </authorList>
    </citation>
    <scope>INTERACTION WITH CEP78</scope>
</reference>
<reference key="12">
    <citation type="journal article" date="2017" name="Nat. Struct. Mol. Biol.">
        <title>Site-specific mapping of the human SUMO proteome reveals co-modification with phosphorylation.</title>
        <authorList>
            <person name="Hendriks I.A."/>
            <person name="Lyon D."/>
            <person name="Young C."/>
            <person name="Jensen L.J."/>
            <person name="Vertegaal A.C."/>
            <person name="Nielsen M.L."/>
        </authorList>
    </citation>
    <scope>SUMOYLATION [LARGE SCALE ANALYSIS] AT LYS-468 AND LYS-484</scope>
    <scope>IDENTIFICATION BY MASS SPECTROMETRY [LARGE SCALE ANALYSIS]</scope>
</reference>
<reference key="13">
    <citation type="journal article" date="2020" name="Sci. Adv.">
        <title>A helical inner scaffold provides a structural basis for centriole cohesion.</title>
        <authorList>
            <person name="Le Guennec M."/>
            <person name="Klena N."/>
            <person name="Gambarotto D."/>
            <person name="Laporte M.H."/>
            <person name="Tassin A.M."/>
            <person name="van den Hoek H."/>
            <person name="Erdmann P.S."/>
            <person name="Schaffer M."/>
            <person name="Kovacik L."/>
            <person name="Borgers S."/>
            <person name="Goldie K.N."/>
            <person name="Stahlberg H."/>
            <person name="Bornens M."/>
            <person name="Azimzadeh J."/>
            <person name="Engel B.D."/>
            <person name="Hamel V."/>
            <person name="Guichard P."/>
        </authorList>
    </citation>
    <scope>SUBCELLULAR LOCATION</scope>
    <scope>COMPLEX FORMATION WITH POC1B; CETN2 AND POC5</scope>
</reference>
<reference key="14">
    <citation type="journal article" date="2020" name="Elife">
        <title>WDR90 is a centriolar microtubule wall protein important for centriole architecture integrity.</title>
        <authorList>
            <person name="Steib E."/>
            <person name="Laporte M.H."/>
            <person name="Gambarotto D."/>
            <person name="Olieric N."/>
            <person name="Zheng C."/>
            <person name="Borgers S."/>
            <person name="Olieric V."/>
            <person name="Le Guennec M."/>
            <person name="Koll F."/>
            <person name="Tassin A.M."/>
            <person name="Steinmetz M.O."/>
            <person name="Guichard P."/>
            <person name="Hamel V."/>
        </authorList>
    </citation>
    <scope>SUBCELLULAR LOCATION</scope>
</reference>
<reference key="15">
    <citation type="journal article" date="2022" name="Int. J. Mol. Sci.">
        <title>Interactions between C8orf37 and FAM161A, Two Ciliary Proteins Essential for Photoreceptor Survival.</title>
        <authorList>
            <person name="Liu Y."/>
            <person name="Chen J."/>
            <person name="Sager R."/>
            <person name="Sasaki E."/>
            <person name="Hu H."/>
        </authorList>
    </citation>
    <scope>INTERACTION WITH CFAP418</scope>
    <scope>TISSUE SPECIFICITY</scope>
</reference>
<reference key="16">
    <citation type="journal article" date="2023" name="J. Cell Biol.">
        <title>CCDC15 localizes to the centriole inner scaffold and controls centriole length and integrity.</title>
        <authorList>
            <person name="Arslanhan M.D."/>
            <person name="Cengiz-Emek S."/>
            <person name="Odabasi E."/>
            <person name="Steib E."/>
            <person name="Hamel V."/>
            <person name="Guichard P."/>
            <person name="Firat-Karalar E.N."/>
        </authorList>
    </citation>
    <scope>INTERACTION WITH CCDC15</scope>
    <scope>SUBCELLULAR LOCATION</scope>
</reference>
<reference key="17">
    <citation type="journal article" date="2019" name="Int. J. Ophthalmol.">
        <title>Whole-exome sequencing identifies novel mutations in genes responsible for retinitis pigmentosa in 2 nonconsanguineous Chinese families.</title>
        <authorList>
            <person name="Hu Y.S."/>
            <person name="Song H."/>
            <person name="Li Y."/>
            <person name="Xiao Z.Y."/>
            <person name="Li T."/>
        </authorList>
    </citation>
    <scope>VARIANT RP28 315-LYS--HIS-660 DEL</scope>
</reference>
<name>F161A_HUMAN</name>
<accession>Q3B820</accession>
<accession>B4DJV7</accession>
<accession>Q9H8R2</accession>
<keyword id="KW-0025">Alternative splicing</keyword>
<keyword id="KW-0966">Cell projection</keyword>
<keyword id="KW-1186">Ciliopathy</keyword>
<keyword id="KW-0969">Cilium</keyword>
<keyword id="KW-0970">Cilium biogenesis/degradation</keyword>
<keyword id="KW-0175">Coiled coil</keyword>
<keyword id="KW-0963">Cytoplasm</keyword>
<keyword id="KW-0206">Cytoskeleton</keyword>
<keyword id="KW-0225">Disease variant</keyword>
<keyword id="KW-1017">Isopeptide bond</keyword>
<keyword id="KW-1267">Proteomics identification</keyword>
<keyword id="KW-1185">Reference proteome</keyword>
<keyword id="KW-0682">Retinitis pigmentosa</keyword>
<keyword id="KW-0716">Sensory transduction</keyword>
<keyword id="KW-0832">Ubl conjugation</keyword>
<keyword id="KW-0844">Vision</keyword>